<proteinExistence type="inferred from homology"/>
<dbReference type="EC" id="3.6.1.27" evidence="1"/>
<dbReference type="EMBL" id="CP001098">
    <property type="protein sequence ID" value="ACL69631.1"/>
    <property type="molecule type" value="Genomic_DNA"/>
</dbReference>
<dbReference type="RefSeq" id="WP_012635818.1">
    <property type="nucleotide sequence ID" value="NC_011899.1"/>
</dbReference>
<dbReference type="SMR" id="B8CWG2"/>
<dbReference type="STRING" id="373903.Hore_08750"/>
<dbReference type="KEGG" id="hor:Hore_08750"/>
<dbReference type="eggNOG" id="COG1968">
    <property type="taxonomic scope" value="Bacteria"/>
</dbReference>
<dbReference type="HOGENOM" id="CLU_060296_1_2_9"/>
<dbReference type="OrthoDB" id="9808289at2"/>
<dbReference type="Proteomes" id="UP000000719">
    <property type="component" value="Chromosome"/>
</dbReference>
<dbReference type="GO" id="GO:0005886">
    <property type="term" value="C:plasma membrane"/>
    <property type="evidence" value="ECO:0007669"/>
    <property type="project" value="UniProtKB-SubCell"/>
</dbReference>
<dbReference type="GO" id="GO:0050380">
    <property type="term" value="F:undecaprenyl-diphosphatase activity"/>
    <property type="evidence" value="ECO:0007669"/>
    <property type="project" value="UniProtKB-UniRule"/>
</dbReference>
<dbReference type="GO" id="GO:0071555">
    <property type="term" value="P:cell wall organization"/>
    <property type="evidence" value="ECO:0007669"/>
    <property type="project" value="UniProtKB-KW"/>
</dbReference>
<dbReference type="GO" id="GO:0009252">
    <property type="term" value="P:peptidoglycan biosynthetic process"/>
    <property type="evidence" value="ECO:0007669"/>
    <property type="project" value="UniProtKB-KW"/>
</dbReference>
<dbReference type="GO" id="GO:0008360">
    <property type="term" value="P:regulation of cell shape"/>
    <property type="evidence" value="ECO:0007669"/>
    <property type="project" value="UniProtKB-KW"/>
</dbReference>
<dbReference type="GO" id="GO:0046677">
    <property type="term" value="P:response to antibiotic"/>
    <property type="evidence" value="ECO:0007669"/>
    <property type="project" value="UniProtKB-UniRule"/>
</dbReference>
<dbReference type="HAMAP" id="MF_01006">
    <property type="entry name" value="Undec_diphosphatase"/>
    <property type="match status" value="1"/>
</dbReference>
<dbReference type="InterPro" id="IPR003824">
    <property type="entry name" value="UppP"/>
</dbReference>
<dbReference type="NCBIfam" id="TIGR00753">
    <property type="entry name" value="undec_PP_bacA"/>
    <property type="match status" value="1"/>
</dbReference>
<dbReference type="PANTHER" id="PTHR30622">
    <property type="entry name" value="UNDECAPRENYL-DIPHOSPHATASE"/>
    <property type="match status" value="1"/>
</dbReference>
<dbReference type="PANTHER" id="PTHR30622:SF2">
    <property type="entry name" value="UNDECAPRENYL-DIPHOSPHATASE"/>
    <property type="match status" value="1"/>
</dbReference>
<dbReference type="Pfam" id="PF02673">
    <property type="entry name" value="BacA"/>
    <property type="match status" value="1"/>
</dbReference>
<evidence type="ECO:0000255" key="1">
    <source>
        <dbReference type="HAMAP-Rule" id="MF_01006"/>
    </source>
</evidence>
<reference key="1">
    <citation type="journal article" date="2009" name="PLoS ONE">
        <title>Genome analysis of the anaerobic thermohalophilic bacterium Halothermothrix orenii.</title>
        <authorList>
            <person name="Mavromatis K."/>
            <person name="Ivanova N."/>
            <person name="Anderson I."/>
            <person name="Lykidis A."/>
            <person name="Hooper S.D."/>
            <person name="Sun H."/>
            <person name="Kunin V."/>
            <person name="Lapidus A."/>
            <person name="Hugenholtz P."/>
            <person name="Patel B."/>
            <person name="Kyrpides N.C."/>
        </authorList>
    </citation>
    <scope>NUCLEOTIDE SEQUENCE [LARGE SCALE GENOMIC DNA]</scope>
    <source>
        <strain>H 168 / OCM 544 / DSM 9562</strain>
    </source>
</reference>
<gene>
    <name evidence="1" type="primary">uppP</name>
    <name type="ordered locus">Hore_08750</name>
</gene>
<keyword id="KW-0046">Antibiotic resistance</keyword>
<keyword id="KW-0997">Cell inner membrane</keyword>
<keyword id="KW-1003">Cell membrane</keyword>
<keyword id="KW-0133">Cell shape</keyword>
<keyword id="KW-0961">Cell wall biogenesis/degradation</keyword>
<keyword id="KW-0378">Hydrolase</keyword>
<keyword id="KW-0472">Membrane</keyword>
<keyword id="KW-0573">Peptidoglycan synthesis</keyword>
<keyword id="KW-1185">Reference proteome</keyword>
<keyword id="KW-0812">Transmembrane</keyword>
<keyword id="KW-1133">Transmembrane helix</keyword>
<accession>B8CWG2</accession>
<organism>
    <name type="scientific">Halothermothrix orenii (strain H 168 / OCM 544 / DSM 9562)</name>
    <dbReference type="NCBI Taxonomy" id="373903"/>
    <lineage>
        <taxon>Bacteria</taxon>
        <taxon>Bacillati</taxon>
        <taxon>Bacillota</taxon>
        <taxon>Clostridia</taxon>
        <taxon>Halanaerobiales</taxon>
        <taxon>Halothermotrichaceae</taxon>
        <taxon>Halothermothrix</taxon>
    </lineage>
</organism>
<sequence length="259" mass="28837">MEIFKVIFLGIIQGLTEFLPISSSGHLVLFQELLGINTDQITLDVFLHFGTVIPVLIIFWDDVRDIIFFKKEKRWLTILILVGIIPTGIIGILFEDFFANLFSSVKTVGFMLLVTGFLLYLSEKLSNYNKELKEMQYHNALIVGVAQGMAIIPGISRSGSTIVASLLQGFDRDAAARYSFLLSAPVIFGAGLVELKDALSTGLEQLTWLSIIIGTIFAALSGYFAIKYLLYILRKGKLTVFAYYCWIVGIMIIILAGIF</sequence>
<name>UPPP_HALOH</name>
<comment type="function">
    <text evidence="1">Catalyzes the dephosphorylation of undecaprenyl diphosphate (UPP). Confers resistance to bacitracin.</text>
</comment>
<comment type="catalytic activity">
    <reaction evidence="1">
        <text>di-trans,octa-cis-undecaprenyl diphosphate + H2O = di-trans,octa-cis-undecaprenyl phosphate + phosphate + H(+)</text>
        <dbReference type="Rhea" id="RHEA:28094"/>
        <dbReference type="ChEBI" id="CHEBI:15377"/>
        <dbReference type="ChEBI" id="CHEBI:15378"/>
        <dbReference type="ChEBI" id="CHEBI:43474"/>
        <dbReference type="ChEBI" id="CHEBI:58405"/>
        <dbReference type="ChEBI" id="CHEBI:60392"/>
        <dbReference type="EC" id="3.6.1.27"/>
    </reaction>
</comment>
<comment type="subcellular location">
    <subcellularLocation>
        <location evidence="1">Cell inner membrane</location>
        <topology evidence="1">Multi-pass membrane protein</topology>
    </subcellularLocation>
</comment>
<comment type="miscellaneous">
    <text>Bacitracin is thought to be involved in the inhibition of peptidoglycan synthesis by sequestering undecaprenyl diphosphate, thereby reducing the pool of lipid carrier available.</text>
</comment>
<comment type="similarity">
    <text evidence="1">Belongs to the UppP family.</text>
</comment>
<protein>
    <recommendedName>
        <fullName evidence="1">Undecaprenyl-diphosphatase</fullName>
        <ecNumber evidence="1">3.6.1.27</ecNumber>
    </recommendedName>
    <alternativeName>
        <fullName evidence="1">Bacitracin resistance protein</fullName>
    </alternativeName>
    <alternativeName>
        <fullName evidence="1">Undecaprenyl pyrophosphate phosphatase</fullName>
    </alternativeName>
</protein>
<feature type="chain" id="PRO_1000148816" description="Undecaprenyl-diphosphatase">
    <location>
        <begin position="1"/>
        <end position="259"/>
    </location>
</feature>
<feature type="transmembrane region" description="Helical" evidence="1">
    <location>
        <begin position="1"/>
        <end position="21"/>
    </location>
</feature>
<feature type="transmembrane region" description="Helical" evidence="1">
    <location>
        <begin position="40"/>
        <end position="60"/>
    </location>
</feature>
<feature type="transmembrane region" description="Helical" evidence="1">
    <location>
        <begin position="75"/>
        <end position="95"/>
    </location>
</feature>
<feature type="transmembrane region" description="Helical" evidence="1">
    <location>
        <begin position="101"/>
        <end position="121"/>
    </location>
</feature>
<feature type="transmembrane region" description="Helical" evidence="1">
    <location>
        <begin position="179"/>
        <end position="199"/>
    </location>
</feature>
<feature type="transmembrane region" description="Helical" evidence="1">
    <location>
        <begin position="206"/>
        <end position="226"/>
    </location>
</feature>
<feature type="transmembrane region" description="Helical" evidence="1">
    <location>
        <begin position="239"/>
        <end position="259"/>
    </location>
</feature>